<sequence length="165" mass="18615">MAKGGNKKATAAARAAANRLLADNRLARHQYEILDTLETGIELVGTEVKSIRAGQANLRDGFCLIRKGELQLHNVHISPHSHAGSYFNHDPLRTRKLLAHRREIDKLRGQLDRKGLTLIPLNLHLKGSWIKLTIGLGKGRKLHDKRQDEKRKQADREVKSALARY</sequence>
<reference key="1">
    <citation type="journal article" date="2003" name="Nature">
        <title>Genome divergence in two Prochlorococcus ecotypes reflects oceanic niche differentiation.</title>
        <authorList>
            <person name="Rocap G."/>
            <person name="Larimer F.W."/>
            <person name="Lamerdin J.E."/>
            <person name="Malfatti S."/>
            <person name="Chain P."/>
            <person name="Ahlgren N.A."/>
            <person name="Arellano A."/>
            <person name="Coleman M."/>
            <person name="Hauser L."/>
            <person name="Hess W.R."/>
            <person name="Johnson Z.I."/>
            <person name="Land M.L."/>
            <person name="Lindell D."/>
            <person name="Post A.F."/>
            <person name="Regala W."/>
            <person name="Shah M."/>
            <person name="Shaw S.L."/>
            <person name="Steglich C."/>
            <person name="Sullivan M.B."/>
            <person name="Ting C.S."/>
            <person name="Tolonen A."/>
            <person name="Webb E.A."/>
            <person name="Zinser E.R."/>
            <person name="Chisholm S.W."/>
        </authorList>
    </citation>
    <scope>NUCLEOTIDE SEQUENCE [LARGE SCALE GENOMIC DNA]</scope>
    <source>
        <strain>MIT 9313</strain>
    </source>
</reference>
<keyword id="KW-0963">Cytoplasm</keyword>
<keyword id="KW-1185">Reference proteome</keyword>
<keyword id="KW-0694">RNA-binding</keyword>
<proteinExistence type="inferred from homology"/>
<feature type="chain" id="PRO_0000103006" description="SsrA-binding protein">
    <location>
        <begin position="1"/>
        <end position="165"/>
    </location>
</feature>
<feature type="region of interest" description="Disordered" evidence="2">
    <location>
        <begin position="141"/>
        <end position="165"/>
    </location>
</feature>
<feature type="compositionally biased region" description="Basic and acidic residues" evidence="2">
    <location>
        <begin position="145"/>
        <end position="159"/>
    </location>
</feature>
<accession>Q7V911</accession>
<name>SSRP_PROMM</name>
<comment type="function">
    <text evidence="1">Required for rescue of stalled ribosomes mediated by trans-translation. Binds to transfer-messenger RNA (tmRNA), required for stable association of tmRNA with ribosomes. tmRNA and SmpB together mimic tRNA shape, replacing the anticodon stem-loop with SmpB. tmRNA is encoded by the ssrA gene; the 2 termini fold to resemble tRNA(Ala) and it encodes a 'tag peptide', a short internal open reading frame. During trans-translation Ala-aminoacylated tmRNA acts like a tRNA, entering the A-site of stalled ribosomes, displacing the stalled mRNA. The ribosome then switches to translate the ORF on the tmRNA; the nascent peptide is terminated with the 'tag peptide' encoded by the tmRNA and targeted for degradation. The ribosome is freed to recommence translation, which seems to be the essential function of trans-translation.</text>
</comment>
<comment type="subcellular location">
    <subcellularLocation>
        <location evidence="1">Cytoplasm</location>
    </subcellularLocation>
    <text evidence="1">The tmRNA-SmpB complex associates with stalled 70S ribosomes.</text>
</comment>
<comment type="similarity">
    <text evidence="1">Belongs to the SmpB family.</text>
</comment>
<gene>
    <name evidence="1" type="primary">smpB</name>
    <name type="ordered locus">PMT_0155</name>
</gene>
<dbReference type="EMBL" id="BX548175">
    <property type="protein sequence ID" value="CAE20330.1"/>
    <property type="molecule type" value="Genomic_DNA"/>
</dbReference>
<dbReference type="RefSeq" id="WP_011129533.1">
    <property type="nucleotide sequence ID" value="NC_005071.1"/>
</dbReference>
<dbReference type="SMR" id="Q7V911"/>
<dbReference type="KEGG" id="pmt:PMT_0155"/>
<dbReference type="eggNOG" id="COG0691">
    <property type="taxonomic scope" value="Bacteria"/>
</dbReference>
<dbReference type="HOGENOM" id="CLU_108953_0_1_3"/>
<dbReference type="OrthoDB" id="9805462at2"/>
<dbReference type="Proteomes" id="UP000001423">
    <property type="component" value="Chromosome"/>
</dbReference>
<dbReference type="GO" id="GO:0005829">
    <property type="term" value="C:cytosol"/>
    <property type="evidence" value="ECO:0007669"/>
    <property type="project" value="TreeGrafter"/>
</dbReference>
<dbReference type="GO" id="GO:0003723">
    <property type="term" value="F:RNA binding"/>
    <property type="evidence" value="ECO:0007669"/>
    <property type="project" value="UniProtKB-UniRule"/>
</dbReference>
<dbReference type="GO" id="GO:0070929">
    <property type="term" value="P:trans-translation"/>
    <property type="evidence" value="ECO:0007669"/>
    <property type="project" value="UniProtKB-UniRule"/>
</dbReference>
<dbReference type="CDD" id="cd09294">
    <property type="entry name" value="SmpB"/>
    <property type="match status" value="1"/>
</dbReference>
<dbReference type="Gene3D" id="2.40.280.10">
    <property type="match status" value="1"/>
</dbReference>
<dbReference type="HAMAP" id="MF_00023">
    <property type="entry name" value="SmpB"/>
    <property type="match status" value="1"/>
</dbReference>
<dbReference type="InterPro" id="IPR023620">
    <property type="entry name" value="SmpB"/>
</dbReference>
<dbReference type="InterPro" id="IPR000037">
    <property type="entry name" value="SsrA-bd_prot"/>
</dbReference>
<dbReference type="InterPro" id="IPR020081">
    <property type="entry name" value="SsrA-bd_prot_CS"/>
</dbReference>
<dbReference type="NCBIfam" id="NF003843">
    <property type="entry name" value="PRK05422.1"/>
    <property type="match status" value="1"/>
</dbReference>
<dbReference type="NCBIfam" id="TIGR00086">
    <property type="entry name" value="smpB"/>
    <property type="match status" value="1"/>
</dbReference>
<dbReference type="PANTHER" id="PTHR30308:SF2">
    <property type="entry name" value="SSRA-BINDING PROTEIN"/>
    <property type="match status" value="1"/>
</dbReference>
<dbReference type="PANTHER" id="PTHR30308">
    <property type="entry name" value="TMRNA-BINDING COMPONENT OF TRANS-TRANSLATION TAGGING COMPLEX"/>
    <property type="match status" value="1"/>
</dbReference>
<dbReference type="Pfam" id="PF01668">
    <property type="entry name" value="SmpB"/>
    <property type="match status" value="1"/>
</dbReference>
<dbReference type="SUPFAM" id="SSF74982">
    <property type="entry name" value="Small protein B (SmpB)"/>
    <property type="match status" value="1"/>
</dbReference>
<dbReference type="PROSITE" id="PS01317">
    <property type="entry name" value="SSRP"/>
    <property type="match status" value="1"/>
</dbReference>
<organism>
    <name type="scientific">Prochlorococcus marinus (strain MIT 9313)</name>
    <dbReference type="NCBI Taxonomy" id="74547"/>
    <lineage>
        <taxon>Bacteria</taxon>
        <taxon>Bacillati</taxon>
        <taxon>Cyanobacteriota</taxon>
        <taxon>Cyanophyceae</taxon>
        <taxon>Synechococcales</taxon>
        <taxon>Prochlorococcaceae</taxon>
        <taxon>Prochlorococcus</taxon>
    </lineage>
</organism>
<evidence type="ECO:0000255" key="1">
    <source>
        <dbReference type="HAMAP-Rule" id="MF_00023"/>
    </source>
</evidence>
<evidence type="ECO:0000256" key="2">
    <source>
        <dbReference type="SAM" id="MobiDB-lite"/>
    </source>
</evidence>
<protein>
    <recommendedName>
        <fullName evidence="1">SsrA-binding protein</fullName>
    </recommendedName>
    <alternativeName>
        <fullName evidence="1">Small protein B</fullName>
    </alternativeName>
</protein>